<accession>B1WUI0</accession>
<name>ATPF1_CROS5</name>
<dbReference type="EMBL" id="CP000806">
    <property type="protein sequence ID" value="ACB53834.1"/>
    <property type="molecule type" value="Genomic_DNA"/>
</dbReference>
<dbReference type="SMR" id="B1WUI0"/>
<dbReference type="STRING" id="43989.cce_4486"/>
<dbReference type="KEGG" id="cyt:cce_4486"/>
<dbReference type="eggNOG" id="COG0711">
    <property type="taxonomic scope" value="Bacteria"/>
</dbReference>
<dbReference type="HOGENOM" id="CLU_079215_8_1_3"/>
<dbReference type="Proteomes" id="UP000001203">
    <property type="component" value="Chromosome circular"/>
</dbReference>
<dbReference type="GO" id="GO:0031676">
    <property type="term" value="C:plasma membrane-derived thylakoid membrane"/>
    <property type="evidence" value="ECO:0007669"/>
    <property type="project" value="UniProtKB-SubCell"/>
</dbReference>
<dbReference type="GO" id="GO:0045259">
    <property type="term" value="C:proton-transporting ATP synthase complex"/>
    <property type="evidence" value="ECO:0007669"/>
    <property type="project" value="UniProtKB-KW"/>
</dbReference>
<dbReference type="GO" id="GO:0046933">
    <property type="term" value="F:proton-transporting ATP synthase activity, rotational mechanism"/>
    <property type="evidence" value="ECO:0007669"/>
    <property type="project" value="UniProtKB-UniRule"/>
</dbReference>
<dbReference type="CDD" id="cd06503">
    <property type="entry name" value="ATP-synt_Fo_b"/>
    <property type="match status" value="1"/>
</dbReference>
<dbReference type="HAMAP" id="MF_01398">
    <property type="entry name" value="ATP_synth_b_bprime"/>
    <property type="match status" value="1"/>
</dbReference>
<dbReference type="InterPro" id="IPR002146">
    <property type="entry name" value="ATP_synth_b/b'su_bac/chlpt"/>
</dbReference>
<dbReference type="InterPro" id="IPR005864">
    <property type="entry name" value="ATP_synth_F0_bsu_bac"/>
</dbReference>
<dbReference type="NCBIfam" id="TIGR01144">
    <property type="entry name" value="ATP_synt_b"/>
    <property type="match status" value="1"/>
</dbReference>
<dbReference type="NCBIfam" id="NF005606">
    <property type="entry name" value="PRK07352.1"/>
    <property type="match status" value="1"/>
</dbReference>
<dbReference type="PANTHER" id="PTHR34264">
    <property type="entry name" value="ATP SYNTHASE SUBUNIT B, CHLOROPLASTIC"/>
    <property type="match status" value="1"/>
</dbReference>
<dbReference type="PANTHER" id="PTHR34264:SF3">
    <property type="entry name" value="ATP SYNTHASE SUBUNIT B, CHLOROPLASTIC"/>
    <property type="match status" value="1"/>
</dbReference>
<dbReference type="Pfam" id="PF00430">
    <property type="entry name" value="ATP-synt_B"/>
    <property type="match status" value="1"/>
</dbReference>
<proteinExistence type="inferred from homology"/>
<feature type="chain" id="PRO_0000368449" description="ATP synthase subunit b 1">
    <location>
        <begin position="1"/>
        <end position="184"/>
    </location>
</feature>
<feature type="transmembrane region" description="Helical" evidence="1">
    <location>
        <begin position="36"/>
        <end position="55"/>
    </location>
</feature>
<protein>
    <recommendedName>
        <fullName evidence="1">ATP synthase subunit b 1</fullName>
    </recommendedName>
    <alternativeName>
        <fullName evidence="1">ATP synthase F(0) sector subunit b 1</fullName>
    </alternativeName>
    <alternativeName>
        <fullName evidence="1">ATPase subunit I 1</fullName>
    </alternativeName>
    <alternativeName>
        <fullName evidence="1">F-type ATPase subunit b 1</fullName>
        <shortName evidence="1">F-ATPase subunit b 1</shortName>
    </alternativeName>
</protein>
<evidence type="ECO:0000255" key="1">
    <source>
        <dbReference type="HAMAP-Rule" id="MF_01398"/>
    </source>
</evidence>
<evidence type="ECO:0000305" key="2"/>
<gene>
    <name evidence="1 2" type="primary">atpF1</name>
    <name type="ordered locus">cce_4486</name>
</gene>
<keyword id="KW-0066">ATP synthesis</keyword>
<keyword id="KW-0138">CF(0)</keyword>
<keyword id="KW-0375">Hydrogen ion transport</keyword>
<keyword id="KW-0406">Ion transport</keyword>
<keyword id="KW-0472">Membrane</keyword>
<keyword id="KW-1185">Reference proteome</keyword>
<keyword id="KW-0793">Thylakoid</keyword>
<keyword id="KW-0812">Transmembrane</keyword>
<keyword id="KW-1133">Transmembrane helix</keyword>
<keyword id="KW-0813">Transport</keyword>
<comment type="function">
    <text evidence="1">F(1)F(0) ATP synthase produces ATP from ADP in the presence of a proton or sodium gradient. F-type ATPases consist of two structural domains, F(1) containing the extramembraneous catalytic core and F(0) containing the membrane proton channel, linked together by a central stalk and a peripheral stalk. During catalysis, ATP synthesis in the catalytic domain of F(1) is coupled via a rotary mechanism of the central stalk subunits to proton translocation.</text>
</comment>
<comment type="function">
    <text evidence="1">Component of the F(0) channel, it forms part of the peripheral stalk, linking F(1) to F(0).</text>
</comment>
<comment type="subunit">
    <text evidence="1">F-type ATPases have 2 components, F(1) - the catalytic core - and F(0) - the membrane proton channel. F(1) has five subunits: alpha(3), beta(3), gamma(1), delta(1), epsilon(1). F(0) has four main subunits: a(1), b(1), b'(1) and c(10-14). The alpha and beta chains form an alternating ring which encloses part of the gamma chain. F(1) is attached to F(0) by a central stalk formed by the gamma and epsilon chains, while a peripheral stalk is formed by the delta, b and b' chains.</text>
</comment>
<comment type="subcellular location">
    <subcellularLocation>
        <location evidence="1">Cellular thylakoid membrane</location>
        <topology evidence="1">Single-pass membrane protein</topology>
    </subcellularLocation>
</comment>
<comment type="similarity">
    <text evidence="1">Belongs to the ATPase B chain family.</text>
</comment>
<organism>
    <name type="scientific">Crocosphaera subtropica (strain ATCC 51142 / BH68)</name>
    <name type="common">Cyanothece sp. (strain ATCC 51142)</name>
    <dbReference type="NCBI Taxonomy" id="43989"/>
    <lineage>
        <taxon>Bacteria</taxon>
        <taxon>Bacillati</taxon>
        <taxon>Cyanobacteriota</taxon>
        <taxon>Cyanophyceae</taxon>
        <taxon>Oscillatoriophycideae</taxon>
        <taxon>Chroococcales</taxon>
        <taxon>Aphanothecaceae</taxon>
        <taxon>Crocosphaera</taxon>
        <taxon>Crocosphaera subtropica</taxon>
    </lineage>
</organism>
<sequence length="184" mass="20286">MTSITGMIDPFLLLATESHAEGEALIGFHFDFLESNILNLAILVGVLVFYGRKVVGNILSERRNQIAQAIQEAEEKQRTAAQALAKEKENLAQAQKEAARIHEAAIERAKTLRAEIAAQSERDIARLKETAAADLSSEQERVMAQLKKQIAEQAIVKAESQLKAQVDNNTQQRLIDRSIARLGG</sequence>
<reference key="1">
    <citation type="journal article" date="2008" name="Proc. Natl. Acad. Sci. U.S.A.">
        <title>The genome of Cyanothece 51142, a unicellular diazotrophic cyanobacterium important in the marine nitrogen cycle.</title>
        <authorList>
            <person name="Welsh E.A."/>
            <person name="Liberton M."/>
            <person name="Stoeckel J."/>
            <person name="Loh T."/>
            <person name="Elvitigala T."/>
            <person name="Wang C."/>
            <person name="Wollam A."/>
            <person name="Fulton R.S."/>
            <person name="Clifton S.W."/>
            <person name="Jacobs J.M."/>
            <person name="Aurora R."/>
            <person name="Ghosh B.K."/>
            <person name="Sherman L.A."/>
            <person name="Smith R.D."/>
            <person name="Wilson R.K."/>
            <person name="Pakrasi H.B."/>
        </authorList>
    </citation>
    <scope>NUCLEOTIDE SEQUENCE [LARGE SCALE GENOMIC DNA]</scope>
    <source>
        <strain>ATCC 51142 / BH68</strain>
    </source>
</reference>